<accession>P83725</accession>
<reference evidence="1" key="1">
    <citation type="submission" date="2003-12" db="UniProtKB">
        <title>Comparative study of protein profiles on pathogenic and nonpathogenic Naegleria species by 2D-PAGE.</title>
        <authorList>
            <person name="Omura M."/>
            <person name="Furushima-Shimogawara R."/>
            <person name="Izumiyama S."/>
            <person name="Endo T."/>
        </authorList>
    </citation>
    <scope>PROTEIN SEQUENCE</scope>
    <source>
        <strain>ATCC 30214 / Nf 66</strain>
    </source>
</reference>
<evidence type="ECO:0000305" key="1"/>
<feature type="chain" id="PRO_0000055493" description="Unknown protein NF028 from 2D-PAGE">
    <location>
        <begin position="1"/>
        <end position="20" status="greater than"/>
    </location>
</feature>
<feature type="non-terminal residue" evidence="1">
    <location>
        <position position="20"/>
    </location>
</feature>
<name>NF28_NAEFO</name>
<dbReference type="InterPro" id="IPR036291">
    <property type="entry name" value="NAD(P)-bd_dom_sf"/>
</dbReference>
<dbReference type="SUPFAM" id="SSF51735">
    <property type="entry name" value="NAD(P)-binding Rossmann-fold domains"/>
    <property type="match status" value="1"/>
</dbReference>
<protein>
    <recommendedName>
        <fullName>Unknown protein NF028 from 2D-PAGE</fullName>
    </recommendedName>
</protein>
<proteinExistence type="evidence at protein level"/>
<keyword id="KW-0903">Direct protein sequencing</keyword>
<organism evidence="1">
    <name type="scientific">Naegleria fowleri</name>
    <name type="common">Brain eating amoeba</name>
    <dbReference type="NCBI Taxonomy" id="5763"/>
    <lineage>
        <taxon>Eukaryota</taxon>
        <taxon>Discoba</taxon>
        <taxon>Heterolobosea</taxon>
        <taxon>Tetramitia</taxon>
        <taxon>Eutetramitia</taxon>
        <taxon>Vahlkampfiidae</taxon>
        <taxon>Naegleria</taxon>
    </lineage>
</organism>
<sequence length="20" mass="2062">TKQTLKVLITGAAGQIGYSL</sequence>
<comment type="miscellaneous">
    <text evidence="1">On the 2D-gel the determined pI of this unknown protein is: 6.7, its MW is: 28.3 kDa.</text>
</comment>